<name>EFG_CLOPS</name>
<feature type="chain" id="PRO_0000263443" description="Elongation factor G">
    <location>
        <begin position="1"/>
        <end position="688"/>
    </location>
</feature>
<feature type="domain" description="tr-type G">
    <location>
        <begin position="8"/>
        <end position="282"/>
    </location>
</feature>
<feature type="binding site" evidence="1">
    <location>
        <begin position="17"/>
        <end position="24"/>
    </location>
    <ligand>
        <name>GTP</name>
        <dbReference type="ChEBI" id="CHEBI:37565"/>
    </ligand>
</feature>
<feature type="binding site" evidence="1">
    <location>
        <begin position="81"/>
        <end position="85"/>
    </location>
    <ligand>
        <name>GTP</name>
        <dbReference type="ChEBI" id="CHEBI:37565"/>
    </ligand>
</feature>
<feature type="binding site" evidence="1">
    <location>
        <begin position="135"/>
        <end position="138"/>
    </location>
    <ligand>
        <name>GTP</name>
        <dbReference type="ChEBI" id="CHEBI:37565"/>
    </ligand>
</feature>
<reference key="1">
    <citation type="journal article" date="2006" name="Genome Res.">
        <title>Skewed genomic variability in strains of the toxigenic bacterial pathogen, Clostridium perfringens.</title>
        <authorList>
            <person name="Myers G.S.A."/>
            <person name="Rasko D.A."/>
            <person name="Cheung J.K."/>
            <person name="Ravel J."/>
            <person name="Seshadri R."/>
            <person name="DeBoy R.T."/>
            <person name="Ren Q."/>
            <person name="Varga J."/>
            <person name="Awad M.M."/>
            <person name="Brinkac L.M."/>
            <person name="Daugherty S.C."/>
            <person name="Haft D.H."/>
            <person name="Dodson R.J."/>
            <person name="Madupu R."/>
            <person name="Nelson W.C."/>
            <person name="Rosovitz M.J."/>
            <person name="Sullivan S.A."/>
            <person name="Khouri H."/>
            <person name="Dimitrov G.I."/>
            <person name="Watkins K.L."/>
            <person name="Mulligan S."/>
            <person name="Benton J."/>
            <person name="Radune D."/>
            <person name="Fisher D.J."/>
            <person name="Atkins H.S."/>
            <person name="Hiscox T."/>
            <person name="Jost B.H."/>
            <person name="Billington S.J."/>
            <person name="Songer J.G."/>
            <person name="McClane B.A."/>
            <person name="Titball R.W."/>
            <person name="Rood J.I."/>
            <person name="Melville S.B."/>
            <person name="Paulsen I.T."/>
        </authorList>
    </citation>
    <scope>NUCLEOTIDE SEQUENCE [LARGE SCALE GENOMIC DNA]</scope>
    <source>
        <strain>SM101 / Type A</strain>
    </source>
</reference>
<sequence>MARQYPLEKFRNFGIMAHIDAGKTTTTERILFYTGRNHKIGETHDGASTMDWMAQEQERGITITSAATTCFWKGYELNIIDTPGHVDFTVEVERSLRVLDGAVTVLDAKSGVEPQTETVWRQADKYGVPRMIYVNKMDATGADYYNCINTVRERLQANAVAIQIPIGQEDQFQGMVDLLTNQAIIFKDDLGKDIEVGEVPADLADKAEEYRAAMIEAIAETDEELMMKYLEGEELTLEELKVALRKATINNEIIPVICGSSYKNKGVQQMIDGVVDYLPSPLDIPAVKGTNLDGEEEVREASDDAPMSALAFKIATDPFVGRLAFTRVYSGVLESGSYVLNSTKGKKERIGRLVKMHANSREEVESLEAAELGAVIGLKNTTTGDTLCTEAAPIILEKMEFPEPVISIAIEPKTKAGQEKMGIALSKLAEEDPTFKTWTDQETGQTIIAGMGELHLDIIVDRLQREFKVECNVGAPQVAYKETIKKAVEAEAKFARQSGGRGQYGHCKIEMIPTEGEYEFENAIVGGAIPREYIPAVDNGIREAAESGIIAGYPVINFKIRLFDGSYHDVDSSEMAFKIAGSMAFKNAMAKADAVLLEPIMKVEITVPEEYMGDVIGDVNSRRGRMEGMDSRNGAQIIRAFIPLSEMFGYATALRSRTQGRGTYAMEFDHYDDVPKSIQEEVAGKKNK</sequence>
<organism>
    <name type="scientific">Clostridium perfringens (strain SM101 / Type A)</name>
    <dbReference type="NCBI Taxonomy" id="289380"/>
    <lineage>
        <taxon>Bacteria</taxon>
        <taxon>Bacillati</taxon>
        <taxon>Bacillota</taxon>
        <taxon>Clostridia</taxon>
        <taxon>Eubacteriales</taxon>
        <taxon>Clostridiaceae</taxon>
        <taxon>Clostridium</taxon>
    </lineage>
</organism>
<protein>
    <recommendedName>
        <fullName evidence="1">Elongation factor G</fullName>
        <shortName evidence="1">EF-G</shortName>
    </recommendedName>
</protein>
<gene>
    <name evidence="1" type="primary">fusA</name>
    <name type="ordered locus">CPR_2403</name>
</gene>
<comment type="function">
    <text evidence="1">Catalyzes the GTP-dependent ribosomal translocation step during translation elongation. During this step, the ribosome changes from the pre-translocational (PRE) to the post-translocational (POST) state as the newly formed A-site-bound peptidyl-tRNA and P-site-bound deacylated tRNA move to the P and E sites, respectively. Catalyzes the coordinated movement of the two tRNA molecules, the mRNA and conformational changes in the ribosome.</text>
</comment>
<comment type="subcellular location">
    <subcellularLocation>
        <location evidence="1">Cytoplasm</location>
    </subcellularLocation>
</comment>
<comment type="similarity">
    <text evidence="1">Belongs to the TRAFAC class translation factor GTPase superfamily. Classic translation factor GTPase family. EF-G/EF-2 subfamily.</text>
</comment>
<keyword id="KW-0963">Cytoplasm</keyword>
<keyword id="KW-0251">Elongation factor</keyword>
<keyword id="KW-0342">GTP-binding</keyword>
<keyword id="KW-0547">Nucleotide-binding</keyword>
<keyword id="KW-0648">Protein biosynthesis</keyword>
<evidence type="ECO:0000255" key="1">
    <source>
        <dbReference type="HAMAP-Rule" id="MF_00054"/>
    </source>
</evidence>
<proteinExistence type="inferred from homology"/>
<dbReference type="EMBL" id="CP000312">
    <property type="protein sequence ID" value="ABG85516.1"/>
    <property type="molecule type" value="Genomic_DNA"/>
</dbReference>
<dbReference type="RefSeq" id="WP_003452179.1">
    <property type="nucleotide sequence ID" value="NC_008262.1"/>
</dbReference>
<dbReference type="SMR" id="Q0SQE1"/>
<dbReference type="KEGG" id="cpr:CPR_2403"/>
<dbReference type="Proteomes" id="UP000001824">
    <property type="component" value="Chromosome"/>
</dbReference>
<dbReference type="GO" id="GO:0005737">
    <property type="term" value="C:cytoplasm"/>
    <property type="evidence" value="ECO:0007669"/>
    <property type="project" value="UniProtKB-SubCell"/>
</dbReference>
<dbReference type="GO" id="GO:0005525">
    <property type="term" value="F:GTP binding"/>
    <property type="evidence" value="ECO:0007669"/>
    <property type="project" value="UniProtKB-UniRule"/>
</dbReference>
<dbReference type="GO" id="GO:0003924">
    <property type="term" value="F:GTPase activity"/>
    <property type="evidence" value="ECO:0007669"/>
    <property type="project" value="InterPro"/>
</dbReference>
<dbReference type="GO" id="GO:0003746">
    <property type="term" value="F:translation elongation factor activity"/>
    <property type="evidence" value="ECO:0007669"/>
    <property type="project" value="UniProtKB-UniRule"/>
</dbReference>
<dbReference type="GO" id="GO:0032790">
    <property type="term" value="P:ribosome disassembly"/>
    <property type="evidence" value="ECO:0007669"/>
    <property type="project" value="TreeGrafter"/>
</dbReference>
<dbReference type="CDD" id="cd01886">
    <property type="entry name" value="EF-G"/>
    <property type="match status" value="1"/>
</dbReference>
<dbReference type="CDD" id="cd16262">
    <property type="entry name" value="EFG_III"/>
    <property type="match status" value="1"/>
</dbReference>
<dbReference type="CDD" id="cd01434">
    <property type="entry name" value="EFG_mtEFG1_IV"/>
    <property type="match status" value="1"/>
</dbReference>
<dbReference type="CDD" id="cd03713">
    <property type="entry name" value="EFG_mtEFG_C"/>
    <property type="match status" value="1"/>
</dbReference>
<dbReference type="CDD" id="cd04088">
    <property type="entry name" value="EFG_mtEFG_II"/>
    <property type="match status" value="1"/>
</dbReference>
<dbReference type="FunFam" id="2.40.30.10:FF:000006">
    <property type="entry name" value="Elongation factor G"/>
    <property type="match status" value="1"/>
</dbReference>
<dbReference type="FunFam" id="3.30.230.10:FF:000003">
    <property type="entry name" value="Elongation factor G"/>
    <property type="match status" value="1"/>
</dbReference>
<dbReference type="FunFam" id="3.30.70.240:FF:000001">
    <property type="entry name" value="Elongation factor G"/>
    <property type="match status" value="1"/>
</dbReference>
<dbReference type="FunFam" id="3.30.70.870:FF:000001">
    <property type="entry name" value="Elongation factor G"/>
    <property type="match status" value="1"/>
</dbReference>
<dbReference type="FunFam" id="3.40.50.300:FF:000029">
    <property type="entry name" value="Elongation factor G"/>
    <property type="match status" value="1"/>
</dbReference>
<dbReference type="Gene3D" id="3.30.230.10">
    <property type="match status" value="1"/>
</dbReference>
<dbReference type="Gene3D" id="3.30.70.240">
    <property type="match status" value="1"/>
</dbReference>
<dbReference type="Gene3D" id="3.30.70.870">
    <property type="entry name" value="Elongation Factor G (Translational Gtpase), domain 3"/>
    <property type="match status" value="1"/>
</dbReference>
<dbReference type="Gene3D" id="3.40.50.300">
    <property type="entry name" value="P-loop containing nucleotide triphosphate hydrolases"/>
    <property type="match status" value="1"/>
</dbReference>
<dbReference type="Gene3D" id="2.40.30.10">
    <property type="entry name" value="Translation factors"/>
    <property type="match status" value="1"/>
</dbReference>
<dbReference type="HAMAP" id="MF_00054_B">
    <property type="entry name" value="EF_G_EF_2_B"/>
    <property type="match status" value="1"/>
</dbReference>
<dbReference type="InterPro" id="IPR053905">
    <property type="entry name" value="EF-G-like_DII"/>
</dbReference>
<dbReference type="InterPro" id="IPR041095">
    <property type="entry name" value="EFG_II"/>
</dbReference>
<dbReference type="InterPro" id="IPR009022">
    <property type="entry name" value="EFG_III"/>
</dbReference>
<dbReference type="InterPro" id="IPR035647">
    <property type="entry name" value="EFG_III/V"/>
</dbReference>
<dbReference type="InterPro" id="IPR047872">
    <property type="entry name" value="EFG_IV"/>
</dbReference>
<dbReference type="InterPro" id="IPR035649">
    <property type="entry name" value="EFG_V"/>
</dbReference>
<dbReference type="InterPro" id="IPR000640">
    <property type="entry name" value="EFG_V-like"/>
</dbReference>
<dbReference type="InterPro" id="IPR031157">
    <property type="entry name" value="G_TR_CS"/>
</dbReference>
<dbReference type="InterPro" id="IPR027417">
    <property type="entry name" value="P-loop_NTPase"/>
</dbReference>
<dbReference type="InterPro" id="IPR020568">
    <property type="entry name" value="Ribosomal_Su5_D2-typ_SF"/>
</dbReference>
<dbReference type="InterPro" id="IPR014721">
    <property type="entry name" value="Ribsml_uS5_D2-typ_fold_subgr"/>
</dbReference>
<dbReference type="InterPro" id="IPR005225">
    <property type="entry name" value="Small_GTP-bd"/>
</dbReference>
<dbReference type="InterPro" id="IPR000795">
    <property type="entry name" value="T_Tr_GTP-bd_dom"/>
</dbReference>
<dbReference type="InterPro" id="IPR009000">
    <property type="entry name" value="Transl_B-barrel_sf"/>
</dbReference>
<dbReference type="InterPro" id="IPR004540">
    <property type="entry name" value="Transl_elong_EFG/EF2"/>
</dbReference>
<dbReference type="InterPro" id="IPR005517">
    <property type="entry name" value="Transl_elong_EFG/EF2_IV"/>
</dbReference>
<dbReference type="NCBIfam" id="TIGR00484">
    <property type="entry name" value="EF-G"/>
    <property type="match status" value="1"/>
</dbReference>
<dbReference type="NCBIfam" id="NF009379">
    <property type="entry name" value="PRK12740.1-3"/>
    <property type="match status" value="1"/>
</dbReference>
<dbReference type="NCBIfam" id="NF009381">
    <property type="entry name" value="PRK12740.1-5"/>
    <property type="match status" value="1"/>
</dbReference>
<dbReference type="NCBIfam" id="TIGR00231">
    <property type="entry name" value="small_GTP"/>
    <property type="match status" value="1"/>
</dbReference>
<dbReference type="PANTHER" id="PTHR43261:SF1">
    <property type="entry name" value="RIBOSOME-RELEASING FACTOR 2, MITOCHONDRIAL"/>
    <property type="match status" value="1"/>
</dbReference>
<dbReference type="PANTHER" id="PTHR43261">
    <property type="entry name" value="TRANSLATION ELONGATION FACTOR G-RELATED"/>
    <property type="match status" value="1"/>
</dbReference>
<dbReference type="Pfam" id="PF22042">
    <property type="entry name" value="EF-G_D2"/>
    <property type="match status" value="1"/>
</dbReference>
<dbReference type="Pfam" id="PF00679">
    <property type="entry name" value="EFG_C"/>
    <property type="match status" value="1"/>
</dbReference>
<dbReference type="Pfam" id="PF14492">
    <property type="entry name" value="EFG_III"/>
    <property type="match status" value="1"/>
</dbReference>
<dbReference type="Pfam" id="PF03764">
    <property type="entry name" value="EFG_IV"/>
    <property type="match status" value="1"/>
</dbReference>
<dbReference type="Pfam" id="PF00009">
    <property type="entry name" value="GTP_EFTU"/>
    <property type="match status" value="1"/>
</dbReference>
<dbReference type="PRINTS" id="PR00315">
    <property type="entry name" value="ELONGATNFCT"/>
</dbReference>
<dbReference type="SMART" id="SM00838">
    <property type="entry name" value="EFG_C"/>
    <property type="match status" value="1"/>
</dbReference>
<dbReference type="SMART" id="SM00889">
    <property type="entry name" value="EFG_IV"/>
    <property type="match status" value="1"/>
</dbReference>
<dbReference type="SUPFAM" id="SSF54980">
    <property type="entry name" value="EF-G C-terminal domain-like"/>
    <property type="match status" value="2"/>
</dbReference>
<dbReference type="SUPFAM" id="SSF52540">
    <property type="entry name" value="P-loop containing nucleoside triphosphate hydrolases"/>
    <property type="match status" value="1"/>
</dbReference>
<dbReference type="SUPFAM" id="SSF54211">
    <property type="entry name" value="Ribosomal protein S5 domain 2-like"/>
    <property type="match status" value="1"/>
</dbReference>
<dbReference type="SUPFAM" id="SSF50447">
    <property type="entry name" value="Translation proteins"/>
    <property type="match status" value="1"/>
</dbReference>
<dbReference type="PROSITE" id="PS00301">
    <property type="entry name" value="G_TR_1"/>
    <property type="match status" value="1"/>
</dbReference>
<dbReference type="PROSITE" id="PS51722">
    <property type="entry name" value="G_TR_2"/>
    <property type="match status" value="1"/>
</dbReference>
<accession>Q0SQE1</accession>